<protein>
    <recommendedName>
        <fullName>Pars intercerebralis major peptide D1</fullName>
        <shortName>PMP-D1</shortName>
    </recommendedName>
</protein>
<organism>
    <name type="scientific">Locusta migratoria</name>
    <name type="common">Migratory locust</name>
    <dbReference type="NCBI Taxonomy" id="7004"/>
    <lineage>
        <taxon>Eukaryota</taxon>
        <taxon>Metazoa</taxon>
        <taxon>Ecdysozoa</taxon>
        <taxon>Arthropoda</taxon>
        <taxon>Hexapoda</taxon>
        <taxon>Insecta</taxon>
        <taxon>Pterygota</taxon>
        <taxon>Neoptera</taxon>
        <taxon>Polyneoptera</taxon>
        <taxon>Orthoptera</taxon>
        <taxon>Caelifera</taxon>
        <taxon>Acrididea</taxon>
        <taxon>Acridomorpha</taxon>
        <taxon>Acridoidea</taxon>
        <taxon>Acrididae</taxon>
        <taxon>Oedipodinae</taxon>
        <taxon>Locusta</taxon>
    </lineage>
</organism>
<proteinExistence type="evidence at protein level"/>
<evidence type="ECO:0000305" key="1"/>
<name>PMD1_LOCMI</name>
<dbReference type="PIR" id="S23075">
    <property type="entry name" value="S23075"/>
</dbReference>
<dbReference type="SMR" id="P80059"/>
<dbReference type="GO" id="GO:0005576">
    <property type="term" value="C:extracellular region"/>
    <property type="evidence" value="ECO:0007669"/>
    <property type="project" value="UniProtKB-SubCell"/>
</dbReference>
<dbReference type="GO" id="GO:0007218">
    <property type="term" value="P:neuropeptide signaling pathway"/>
    <property type="evidence" value="ECO:0007669"/>
    <property type="project" value="UniProtKB-KW"/>
</dbReference>
<dbReference type="Gene3D" id="2.10.25.160">
    <property type="entry name" value="Granulin"/>
    <property type="match status" value="1"/>
</dbReference>
<dbReference type="InterPro" id="IPR000118">
    <property type="entry name" value="Granulin"/>
</dbReference>
<dbReference type="InterPro" id="IPR039036">
    <property type="entry name" value="Granulin_fam"/>
</dbReference>
<dbReference type="InterPro" id="IPR037277">
    <property type="entry name" value="Granulin_sf"/>
</dbReference>
<dbReference type="PANTHER" id="PTHR12274">
    <property type="entry name" value="GRANULIN"/>
    <property type="match status" value="1"/>
</dbReference>
<dbReference type="PANTHER" id="PTHR12274:SF3">
    <property type="entry name" value="PROGRANULIN"/>
    <property type="match status" value="1"/>
</dbReference>
<dbReference type="Pfam" id="PF00396">
    <property type="entry name" value="Granulin"/>
    <property type="match status" value="1"/>
</dbReference>
<dbReference type="SMART" id="SM00277">
    <property type="entry name" value="GRAN"/>
    <property type="match status" value="1"/>
</dbReference>
<dbReference type="PROSITE" id="PS00799">
    <property type="entry name" value="GRANULINS"/>
    <property type="match status" value="1"/>
</dbReference>
<sequence length="54" mass="5788">SCTEKTCPGTETCCTTPQGEEGCCPYKEGVCCLDGIHCCPSGTVCDEDHRRCIQ</sequence>
<keyword id="KW-0903">Direct protein sequencing</keyword>
<keyword id="KW-1015">Disulfide bond</keyword>
<keyword id="KW-0527">Neuropeptide</keyword>
<keyword id="KW-0964">Secreted</keyword>
<feature type="chain" id="PRO_0000150134" description="Pars intercerebralis major peptide D1">
    <location>
        <begin position="1"/>
        <end position="54"/>
    </location>
</feature>
<reference key="1">
    <citation type="journal article" date="1992" name="Eur. J. Biochem.">
        <title>Isolation and structural determination of three peptides from the insect Locusta migratoria. Identification of a deoxyhexose-linked peptide.</title>
        <authorList>
            <person name="Nakakura N."/>
            <person name="Hietter H."/>
            <person name="van Dorsselaer A."/>
            <person name="Luu B."/>
        </authorList>
    </citation>
    <scope>PROTEIN SEQUENCE</scope>
    <source>
        <tissue>Pars intercerebralis</tissue>
    </source>
</reference>
<comment type="subcellular location">
    <subcellularLocation>
        <location>Secreted</location>
    </subcellularLocation>
</comment>
<comment type="tissue specificity">
    <text>Brain.</text>
</comment>
<comment type="PTM">
    <text>Six disulfide bonds are present.</text>
</comment>
<comment type="similarity">
    <text evidence="1">Belongs to the granulin family.</text>
</comment>
<accession>P80059</accession>